<protein>
    <recommendedName>
        <fullName>Probable replication endonuclease from prophage-like region</fullName>
        <ecNumber>3.1.-.-</ecNumber>
    </recommendedName>
    <alternativeName>
        <fullName>Fels-2 prophage protein</fullName>
    </alternativeName>
</protein>
<gene>
    <name type="ordered locus">STM2729</name>
</gene>
<keyword id="KW-0235">DNA replication</keyword>
<keyword id="KW-0255">Endonuclease</keyword>
<keyword id="KW-0378">Hydrolase</keyword>
<keyword id="KW-0540">Nuclease</keyword>
<keyword id="KW-1185">Reference proteome</keyword>
<proteinExistence type="inferred from homology"/>
<feature type="chain" id="PRO_0000278168" description="Probable replication endonuclease from prophage-like region">
    <location>
        <begin position="1"/>
        <end position="809"/>
    </location>
</feature>
<feature type="active site" description="O-(5'-phospho-DNA)-tyrosine intermediate" evidence="1">
    <location>
        <position position="503"/>
    </location>
</feature>
<feature type="active site" description="O-(5'-phospho-DNA)-tyrosine intermediate" evidence="1">
    <location>
        <position position="507"/>
    </location>
</feature>
<name>ENDPH_SALTY</name>
<evidence type="ECO:0000250" key="1"/>
<evidence type="ECO:0000305" key="2"/>
<reference key="1">
    <citation type="journal article" date="2001" name="Nature">
        <title>Complete genome sequence of Salmonella enterica serovar Typhimurium LT2.</title>
        <authorList>
            <person name="McClelland M."/>
            <person name="Sanderson K.E."/>
            <person name="Spieth J."/>
            <person name="Clifton S.W."/>
            <person name="Latreille P."/>
            <person name="Courtney L."/>
            <person name="Porwollik S."/>
            <person name="Ali J."/>
            <person name="Dante M."/>
            <person name="Du F."/>
            <person name="Hou S."/>
            <person name="Layman D."/>
            <person name="Leonard S."/>
            <person name="Nguyen C."/>
            <person name="Scott K."/>
            <person name="Holmes A."/>
            <person name="Grewal N."/>
            <person name="Mulvaney E."/>
            <person name="Ryan E."/>
            <person name="Sun H."/>
            <person name="Florea L."/>
            <person name="Miller W."/>
            <person name="Stoneking T."/>
            <person name="Nhan M."/>
            <person name="Waterston R."/>
            <person name="Wilson R.K."/>
        </authorList>
    </citation>
    <scope>NUCLEOTIDE SEQUENCE [LARGE SCALE GENOMIC DNA]</scope>
    <source>
        <strain>LT2 / SGSC1412 / ATCC 700720</strain>
    </source>
</reference>
<accession>Q8ZMS4</accession>
<comment type="function">
    <text evidence="2">Possible endonuclease which induces a single-strand cut and initiates DNA replication.</text>
</comment>
<comment type="similarity">
    <text evidence="2">Belongs to the phage GPA family.</text>
</comment>
<organism>
    <name type="scientific">Salmonella typhimurium (strain LT2 / SGSC1412 / ATCC 700720)</name>
    <dbReference type="NCBI Taxonomy" id="99287"/>
    <lineage>
        <taxon>Bacteria</taxon>
        <taxon>Pseudomonadati</taxon>
        <taxon>Pseudomonadota</taxon>
        <taxon>Gammaproteobacteria</taxon>
        <taxon>Enterobacterales</taxon>
        <taxon>Enterobacteriaceae</taxon>
        <taxon>Salmonella</taxon>
    </lineage>
</organism>
<dbReference type="EC" id="3.1.-.-"/>
<dbReference type="EMBL" id="AE006468">
    <property type="protein sequence ID" value="AAL21615.1"/>
    <property type="molecule type" value="Genomic_DNA"/>
</dbReference>
<dbReference type="RefSeq" id="WP_000301161.1">
    <property type="nucleotide sequence ID" value="NC_003197.2"/>
</dbReference>
<dbReference type="STRING" id="99287.STM2729"/>
<dbReference type="PaxDb" id="99287-STM2729"/>
<dbReference type="PATRIC" id="fig|99287.12.peg.2878"/>
<dbReference type="HOGENOM" id="CLU_013772_2_0_6"/>
<dbReference type="BioCyc" id="SENT99287:STM2729-MONOMER"/>
<dbReference type="Proteomes" id="UP000001014">
    <property type="component" value="Chromosome"/>
</dbReference>
<dbReference type="GO" id="GO:0004519">
    <property type="term" value="F:endonuclease activity"/>
    <property type="evidence" value="ECO:0007669"/>
    <property type="project" value="UniProtKB-KW"/>
</dbReference>
<dbReference type="GO" id="GO:0006260">
    <property type="term" value="P:DNA replication"/>
    <property type="evidence" value="ECO:0007669"/>
    <property type="project" value="UniProtKB-KW"/>
</dbReference>
<dbReference type="InterPro" id="IPR008766">
    <property type="entry name" value="Replication_gene_A-like"/>
</dbReference>
<dbReference type="Pfam" id="PF05840">
    <property type="entry name" value="Phage_GPA"/>
    <property type="match status" value="1"/>
</dbReference>
<sequence length="809" mass="92887">MAVSKFTLHNAPTTGGSNEAAVVFPWNTPKKAVNPYLDPAEVAPESALSNLIALYAADNEQEQLRRETLSDEVWERYFFNESRDPVQREIEQDRLISHAKTAREQQRFNPDLVIIADVGAQPAHISKPLLERIKYFHSLGRAKAYSRYLRETIRPCLERLERVRDSQVSASFRFMASHDGLEGLLVLPEMNQDQVKRLSTLVAAHMSMCLDAACGDLFVSDDVKPEEIRQAWERVAAEAMRLEVIPPAFEQLRRKKRRRKPVPYELIPPSLARMLCADWWCRKLWQMRCEWREEQLRAVCLVNKKASPYVSYEAVIHKREQRRKSLEFFRSHELINEDGDTLDMEDVVNASNSNPAHRRNEMMACVKGLELIAEMRGDCAVFYTITCPSRFHATLNNGRPNPKWTSATVRQSSDYLVDTFAAFRKAMHKTGLRWYGVRVAEPHHDGTVHWHLLCFMRKKDRRSITALLRKFAIREDREELGTNTGPRFKSELINPRKGTPTSYIAKYISKNIDGRGLAKEISKETGRPLRDSAEHVSAWASLHRVQQFRFFGIPGRQAYRELRLLAGQAARVQGERKAGAPVLDNPRLDAVLAAADAGCFATYIMKQGGVLVPRKHHLVRTAYELNDEPSAYGDHGIRIYGIWSPIAEGKICTHAMKWKKVRKAVDVQEAAADQGACAPWTRGNNCPLAENLNQQEKDKSADGGTRTDITRMDDKELHDYLYSMSKKDRRELAARLRLVKPKRRKDYKQRITDHQHQQLVYELKSRGFDGSEKEVDLLLRGGSIPSGAGLRIFYRNQRLKEDDKWRNQY</sequence>